<reference key="1">
    <citation type="journal article" date="1993" name="Yeast">
        <title>Molecular genetics in Saccharomyces kluyveri: the HIS3 homolog and its use as a selectable marker gene in S. kluyveri and Saccharomyces cerevisiae.</title>
        <authorList>
            <person name="Weinstock K.G."/>
            <person name="Strathern J.N."/>
        </authorList>
    </citation>
    <scope>NUCLEOTIDE SEQUENCE [GENOMIC DNA]</scope>
    <source>
        <strain>ATCC 58438 / CBS 3082 / BCRC 21498 / NBRC 1685 / JCM 7257 / NCYC 543 / NRRL Y-12651</strain>
    </source>
</reference>
<evidence type="ECO:0000256" key="1">
    <source>
        <dbReference type="SAM" id="MobiDB-lite"/>
    </source>
</evidence>
<name>YHS3_LACK1</name>
<feature type="chain" id="PRO_0000066255" description="Uncharacterized protein in HIS3 3'region">
    <location>
        <begin position="1" status="less than"/>
        <end position="341"/>
    </location>
</feature>
<feature type="region of interest" description="Disordered" evidence="1">
    <location>
        <begin position="1"/>
        <end position="21"/>
    </location>
</feature>
<feature type="region of interest" description="Disordered" evidence="1">
    <location>
        <begin position="291"/>
        <end position="317"/>
    </location>
</feature>
<feature type="compositionally biased region" description="Basic residues" evidence="1">
    <location>
        <begin position="1"/>
        <end position="12"/>
    </location>
</feature>
<feature type="compositionally biased region" description="Polar residues" evidence="1">
    <location>
        <begin position="297"/>
        <end position="312"/>
    </location>
</feature>
<feature type="non-terminal residue">
    <location>
        <position position="1"/>
    </location>
</feature>
<protein>
    <recommendedName>
        <fullName>Uncharacterized protein in HIS3 3'region</fullName>
    </recommendedName>
</protein>
<dbReference type="EMBL" id="Z14125">
    <property type="protein sequence ID" value="CAA78499.1"/>
    <property type="molecule type" value="Genomic_DNA"/>
</dbReference>
<dbReference type="PIR" id="S31236">
    <property type="entry name" value="S31236"/>
</dbReference>
<dbReference type="SMR" id="Q03000"/>
<dbReference type="GO" id="GO:0005763">
    <property type="term" value="C:mitochondrial small ribosomal subunit"/>
    <property type="evidence" value="ECO:0007669"/>
    <property type="project" value="TreeGrafter"/>
</dbReference>
<dbReference type="GO" id="GO:0003735">
    <property type="term" value="F:structural constituent of ribosome"/>
    <property type="evidence" value="ECO:0007669"/>
    <property type="project" value="TreeGrafter"/>
</dbReference>
<dbReference type="GO" id="GO:0070124">
    <property type="term" value="P:mitochondrial translational initiation"/>
    <property type="evidence" value="ECO:0007669"/>
    <property type="project" value="TreeGrafter"/>
</dbReference>
<dbReference type="InterPro" id="IPR016712">
    <property type="entry name" value="Rbsml_bS1m-like"/>
</dbReference>
<dbReference type="PANTHER" id="PTHR28058">
    <property type="entry name" value="37S RIBOSOMAL PROTEIN MRP51, MITOCHONDRIAL"/>
    <property type="match status" value="1"/>
</dbReference>
<dbReference type="PANTHER" id="PTHR28058:SF1">
    <property type="entry name" value="SMALL RIBOSOMAL SUBUNIT PROTEIN BS1M"/>
    <property type="match status" value="1"/>
</dbReference>
<dbReference type="Pfam" id="PF11709">
    <property type="entry name" value="Mit_ribos_Mrp51"/>
    <property type="match status" value="1"/>
</dbReference>
<dbReference type="PIRSF" id="PIRSF018156">
    <property type="entry name" value="MRPL51_fungal"/>
    <property type="match status" value="1"/>
</dbReference>
<proteinExistence type="predicted"/>
<accession>Q03000</accession>
<organism>
    <name type="scientific">Lachancea kluyveri (strain ATCC 58438 / CBS 3082 / BCRC 21498 / NBRC 1685 / JCM 7257 / NCYC 543 / NRRL Y-12651)</name>
    <name type="common">Yeast</name>
    <name type="synonym">Saccharomyces kluyveri</name>
    <dbReference type="NCBI Taxonomy" id="226302"/>
    <lineage>
        <taxon>Eukaryota</taxon>
        <taxon>Fungi</taxon>
        <taxon>Dikarya</taxon>
        <taxon>Ascomycota</taxon>
        <taxon>Saccharomycotina</taxon>
        <taxon>Saccharomycetes</taxon>
        <taxon>Saccharomycetales</taxon>
        <taxon>Saccharomycetaceae</taxon>
        <taxon>Lachancea</taxon>
    </lineage>
</organism>
<sequence length="341" mass="37381">NSRIAHVPKSKKPLNSASPRFHPTHQIIETKPSTLHRQEWGLKSSIPSKVQTRYIIFNDLDTLERLTTFEPNAGSQWSRLRFQELGVAPSYNAGKSNPLFEGSSSSSNQLVPLSSLLNIDPTSSRTDVEKKLSQVKSLRKVFKKWLLSKDPEALKNKSFSAKDMSDNAVEFLSESVGTNTGLNSASLNKVIGTGGLSYNIGGRLRQSPNGVVSKTVVPGRFLNVEGNDRLAAIGGFVANAGSSSPNTSQIDYNMGDFIRELKFPFAVNRAFVQDNGKVVLRANVISGMSSKARMQMSGKNYQQRPSRTTSPAVNPEDSTKYAEELLNILTNFDSGNGKKLR</sequence>